<gene>
    <name evidence="1" type="primary">flgH1</name>
    <name type="ordered locus">YPO0729</name>
    <name type="ordered locus">y3449</name>
    <name type="ordered locus">YP_3040</name>
</gene>
<organism>
    <name type="scientific">Yersinia pestis</name>
    <dbReference type="NCBI Taxonomy" id="632"/>
    <lineage>
        <taxon>Bacteria</taxon>
        <taxon>Pseudomonadati</taxon>
        <taxon>Pseudomonadota</taxon>
        <taxon>Gammaproteobacteria</taxon>
        <taxon>Enterobacterales</taxon>
        <taxon>Yersiniaceae</taxon>
        <taxon>Yersinia</taxon>
    </lineage>
</organism>
<protein>
    <recommendedName>
        <fullName evidence="1">Flagellar L-ring protein 1</fullName>
    </recommendedName>
    <alternativeName>
        <fullName evidence="1">Basal body L-ring protein 1</fullName>
    </alternativeName>
</protein>
<proteinExistence type="inferred from homology"/>
<feature type="signal peptide" evidence="1">
    <location>
        <begin position="1"/>
        <end position="16"/>
    </location>
</feature>
<feature type="chain" id="PRO_0000009487" description="Flagellar L-ring protein 1">
    <location>
        <begin position="17"/>
        <end position="221"/>
    </location>
</feature>
<feature type="lipid moiety-binding region" description="N-palmitoyl cysteine" evidence="1">
    <location>
        <position position="17"/>
    </location>
</feature>
<feature type="lipid moiety-binding region" description="S-diacylglycerol cysteine" evidence="1">
    <location>
        <position position="17"/>
    </location>
</feature>
<comment type="function">
    <text evidence="1">Assembles around the rod to form the L-ring and probably protects the motor/basal body from shearing forces during rotation.</text>
</comment>
<comment type="subunit">
    <text evidence="1">The basal body constitutes a major portion of the flagellar organelle and consists of four rings (L,P,S, and M) mounted on a central rod.</text>
</comment>
<comment type="subcellular location">
    <subcellularLocation>
        <location evidence="1">Cell outer membrane</location>
        <topology evidence="1">Lipid-anchor</topology>
    </subcellularLocation>
    <subcellularLocation>
        <location evidence="1">Bacterial flagellum basal body</location>
    </subcellularLocation>
</comment>
<comment type="similarity">
    <text evidence="1">Belongs to the FlgH family.</text>
</comment>
<keyword id="KW-0975">Bacterial flagellum</keyword>
<keyword id="KW-0998">Cell outer membrane</keyword>
<keyword id="KW-0449">Lipoprotein</keyword>
<keyword id="KW-0472">Membrane</keyword>
<keyword id="KW-0564">Palmitate</keyword>
<keyword id="KW-1185">Reference proteome</keyword>
<keyword id="KW-0732">Signal</keyword>
<dbReference type="EMBL" id="AL590842">
    <property type="protein sequence ID" value="CAL19403.1"/>
    <property type="molecule type" value="Genomic_DNA"/>
</dbReference>
<dbReference type="EMBL" id="AE009952">
    <property type="protein sequence ID" value="AAM86998.1"/>
    <property type="molecule type" value="Genomic_DNA"/>
</dbReference>
<dbReference type="EMBL" id="AE017042">
    <property type="protein sequence ID" value="AAS63215.1"/>
    <property type="molecule type" value="Genomic_DNA"/>
</dbReference>
<dbReference type="PIR" id="AI0089">
    <property type="entry name" value="AI0089"/>
</dbReference>
<dbReference type="RefSeq" id="YP_002345790.1">
    <property type="nucleotide sequence ID" value="NC_003143.1"/>
</dbReference>
<dbReference type="SMR" id="Q8ZHZ5"/>
<dbReference type="IntAct" id="Q8ZHZ5">
    <property type="interactions" value="2"/>
</dbReference>
<dbReference type="STRING" id="214092.YPO0729"/>
<dbReference type="PaxDb" id="214092-YPO0729"/>
<dbReference type="DNASU" id="1148396"/>
<dbReference type="EnsemblBacteria" id="AAS63215">
    <property type="protein sequence ID" value="AAS63215"/>
    <property type="gene ID" value="YP_3040"/>
</dbReference>
<dbReference type="KEGG" id="ype:YPO0729"/>
<dbReference type="KEGG" id="ypk:y3449"/>
<dbReference type="KEGG" id="ypm:YP_3040"/>
<dbReference type="PATRIC" id="fig|214092.21.peg.995"/>
<dbReference type="eggNOG" id="COG2063">
    <property type="taxonomic scope" value="Bacteria"/>
</dbReference>
<dbReference type="HOGENOM" id="CLU_069313_0_2_6"/>
<dbReference type="OMA" id="YRPGFML"/>
<dbReference type="OrthoDB" id="9789463at2"/>
<dbReference type="Proteomes" id="UP000000815">
    <property type="component" value="Chromosome"/>
</dbReference>
<dbReference type="Proteomes" id="UP000001019">
    <property type="component" value="Chromosome"/>
</dbReference>
<dbReference type="Proteomes" id="UP000002490">
    <property type="component" value="Chromosome"/>
</dbReference>
<dbReference type="GO" id="GO:0009427">
    <property type="term" value="C:bacterial-type flagellum basal body, distal rod, L ring"/>
    <property type="evidence" value="ECO:0007669"/>
    <property type="project" value="InterPro"/>
</dbReference>
<dbReference type="GO" id="GO:0009279">
    <property type="term" value="C:cell outer membrane"/>
    <property type="evidence" value="ECO:0007669"/>
    <property type="project" value="UniProtKB-SubCell"/>
</dbReference>
<dbReference type="GO" id="GO:0003774">
    <property type="term" value="F:cytoskeletal motor activity"/>
    <property type="evidence" value="ECO:0007669"/>
    <property type="project" value="InterPro"/>
</dbReference>
<dbReference type="GO" id="GO:0071973">
    <property type="term" value="P:bacterial-type flagellum-dependent cell motility"/>
    <property type="evidence" value="ECO:0007669"/>
    <property type="project" value="InterPro"/>
</dbReference>
<dbReference type="HAMAP" id="MF_00415">
    <property type="entry name" value="FlgH"/>
    <property type="match status" value="1"/>
</dbReference>
<dbReference type="InterPro" id="IPR000527">
    <property type="entry name" value="Flag_Lring"/>
</dbReference>
<dbReference type="NCBIfam" id="NF001304">
    <property type="entry name" value="PRK00249.1-4"/>
    <property type="match status" value="1"/>
</dbReference>
<dbReference type="NCBIfam" id="NF009072">
    <property type="entry name" value="PRK12407.1"/>
    <property type="match status" value="1"/>
</dbReference>
<dbReference type="PANTHER" id="PTHR34933">
    <property type="entry name" value="FLAGELLAR L-RING PROTEIN"/>
    <property type="match status" value="1"/>
</dbReference>
<dbReference type="PANTHER" id="PTHR34933:SF1">
    <property type="entry name" value="FLAGELLAR L-RING PROTEIN"/>
    <property type="match status" value="1"/>
</dbReference>
<dbReference type="Pfam" id="PF02107">
    <property type="entry name" value="FlgH"/>
    <property type="match status" value="1"/>
</dbReference>
<dbReference type="PRINTS" id="PR01008">
    <property type="entry name" value="FLGLRINGFLGH"/>
</dbReference>
<dbReference type="PROSITE" id="PS51257">
    <property type="entry name" value="PROKAR_LIPOPROTEIN"/>
    <property type="match status" value="1"/>
</dbReference>
<evidence type="ECO:0000255" key="1">
    <source>
        <dbReference type="HAMAP-Rule" id="MF_00415"/>
    </source>
</evidence>
<sequence length="221" mass="23963">MKRFLILTPMVLALCGCESPALLVQKDDAEFAPPANLIQPATVTEGGGLFQPANSWSLLQDRRAYRIGDILTVILDESTQSSKQAKTNFGKKNDMSLGVPEVLGKKLNKFGGSISGKRDFDGSATSAQQNMLRGSITVAVHQVLPNGVLVIRGEKWLTLNQGDEYMRVTGLVRADDVARDNSVSSQRIANARISYAGRGALSDANSAGWLTRFFNHPLFPI</sequence>
<name>FLGH1_YERPE</name>
<accession>Q8ZHZ5</accession>
<accession>Q0WIU8</accession>
<accession>Q74RJ1</accession>
<accession>Q7CGL0</accession>
<reference key="1">
    <citation type="journal article" date="2001" name="Nature">
        <title>Genome sequence of Yersinia pestis, the causative agent of plague.</title>
        <authorList>
            <person name="Parkhill J."/>
            <person name="Wren B.W."/>
            <person name="Thomson N.R."/>
            <person name="Titball R.W."/>
            <person name="Holden M.T.G."/>
            <person name="Prentice M.B."/>
            <person name="Sebaihia M."/>
            <person name="James K.D."/>
            <person name="Churcher C.M."/>
            <person name="Mungall K.L."/>
            <person name="Baker S."/>
            <person name="Basham D."/>
            <person name="Bentley S.D."/>
            <person name="Brooks K."/>
            <person name="Cerdeno-Tarraga A.-M."/>
            <person name="Chillingworth T."/>
            <person name="Cronin A."/>
            <person name="Davies R.M."/>
            <person name="Davis P."/>
            <person name="Dougan G."/>
            <person name="Feltwell T."/>
            <person name="Hamlin N."/>
            <person name="Holroyd S."/>
            <person name="Jagels K."/>
            <person name="Karlyshev A.V."/>
            <person name="Leather S."/>
            <person name="Moule S."/>
            <person name="Oyston P.C.F."/>
            <person name="Quail M.A."/>
            <person name="Rutherford K.M."/>
            <person name="Simmonds M."/>
            <person name="Skelton J."/>
            <person name="Stevens K."/>
            <person name="Whitehead S."/>
            <person name="Barrell B.G."/>
        </authorList>
    </citation>
    <scope>NUCLEOTIDE SEQUENCE [LARGE SCALE GENOMIC DNA]</scope>
    <source>
        <strain>CO-92 / Biovar Orientalis</strain>
    </source>
</reference>
<reference key="2">
    <citation type="journal article" date="2002" name="J. Bacteriol.">
        <title>Genome sequence of Yersinia pestis KIM.</title>
        <authorList>
            <person name="Deng W."/>
            <person name="Burland V."/>
            <person name="Plunkett G. III"/>
            <person name="Boutin A."/>
            <person name="Mayhew G.F."/>
            <person name="Liss P."/>
            <person name="Perna N.T."/>
            <person name="Rose D.J."/>
            <person name="Mau B."/>
            <person name="Zhou S."/>
            <person name="Schwartz D.C."/>
            <person name="Fetherston J.D."/>
            <person name="Lindler L.E."/>
            <person name="Brubaker R.R."/>
            <person name="Plano G.V."/>
            <person name="Straley S.C."/>
            <person name="McDonough K.A."/>
            <person name="Nilles M.L."/>
            <person name="Matson J.S."/>
            <person name="Blattner F.R."/>
            <person name="Perry R.D."/>
        </authorList>
    </citation>
    <scope>NUCLEOTIDE SEQUENCE [LARGE SCALE GENOMIC DNA]</scope>
    <source>
        <strain>KIM10+ / Biovar Mediaevalis</strain>
    </source>
</reference>
<reference key="3">
    <citation type="journal article" date="2004" name="DNA Res.">
        <title>Complete genome sequence of Yersinia pestis strain 91001, an isolate avirulent to humans.</title>
        <authorList>
            <person name="Song Y."/>
            <person name="Tong Z."/>
            <person name="Wang J."/>
            <person name="Wang L."/>
            <person name="Guo Z."/>
            <person name="Han Y."/>
            <person name="Zhang J."/>
            <person name="Pei D."/>
            <person name="Zhou D."/>
            <person name="Qin H."/>
            <person name="Pang X."/>
            <person name="Han Y."/>
            <person name="Zhai J."/>
            <person name="Li M."/>
            <person name="Cui B."/>
            <person name="Qi Z."/>
            <person name="Jin L."/>
            <person name="Dai R."/>
            <person name="Chen F."/>
            <person name="Li S."/>
            <person name="Ye C."/>
            <person name="Du Z."/>
            <person name="Lin W."/>
            <person name="Wang J."/>
            <person name="Yu J."/>
            <person name="Yang H."/>
            <person name="Wang J."/>
            <person name="Huang P."/>
            <person name="Yang R."/>
        </authorList>
    </citation>
    <scope>NUCLEOTIDE SEQUENCE [LARGE SCALE GENOMIC DNA]</scope>
    <source>
        <strain>91001 / Biovar Mediaevalis</strain>
    </source>
</reference>